<evidence type="ECO:0000255" key="1"/>
<sequence>MFVDEVINNLKGNEFLNTTLLTKSNKNKLYYAVKQPDGNIKVVLPFVFENKNFLKLSEYKDGIEGATQRVIEEIKQEIIKKKRFLPLAGYFGRIYKALYEPLTVVNCNLNLGYDLWKVDKYNYIEGDKIYLMLRMIFKEKDSKEIVKQINELCNDLDKFIKKIPIDLLIDEAKNIINQKYLRDKLDELGLVCFIANNSKPARKYTEVRRHYRIAGPKDVNIPFECPEELEPIEIELKYGKKVKGLGIKKKEIFIITGRNAQGKTTLLQAIDSGRDDHLIGDGREFIITTKSLSKASTGSMEMSGQDISLFFQKLPPGIKGSPKAVYGTASGSMYMAYQIQRAIKNKTKLILIDEDNSAVNLLVSGVLSKWFEGVKSLAEIIMEDREKLGDSSFIIVTSSLDLLTALGDRAIYLEDHKAKYLDLTYFREELGRYYLELASKFIGVKIRE</sequence>
<feature type="chain" id="PRO_0000107447" description="Uncharacterized protein MJ1628">
    <location>
        <begin position="1"/>
        <end position="448"/>
    </location>
</feature>
<feature type="binding site" evidence="1">
    <location>
        <begin position="257"/>
        <end position="264"/>
    </location>
    <ligand>
        <name>ATP</name>
        <dbReference type="ChEBI" id="CHEBI:30616"/>
    </ligand>
</feature>
<protein>
    <recommendedName>
        <fullName>Uncharacterized protein MJ1628</fullName>
    </recommendedName>
</protein>
<name>Y1628_METJA</name>
<dbReference type="EMBL" id="L77117">
    <property type="protein sequence ID" value="AAB99655.1"/>
    <property type="molecule type" value="Genomic_DNA"/>
</dbReference>
<dbReference type="PIR" id="B64503">
    <property type="entry name" value="B64503"/>
</dbReference>
<dbReference type="RefSeq" id="WP_010871152.1">
    <property type="nucleotide sequence ID" value="NC_000909.1"/>
</dbReference>
<dbReference type="SMR" id="Q59022"/>
<dbReference type="STRING" id="243232.MJ_1628"/>
<dbReference type="PaxDb" id="243232-MJ_1628"/>
<dbReference type="EnsemblBacteria" id="AAB99655">
    <property type="protein sequence ID" value="AAB99655"/>
    <property type="gene ID" value="MJ_1628"/>
</dbReference>
<dbReference type="GeneID" id="1452537"/>
<dbReference type="KEGG" id="mja:MJ_1628"/>
<dbReference type="eggNOG" id="arCOG01746">
    <property type="taxonomic scope" value="Archaea"/>
</dbReference>
<dbReference type="HOGENOM" id="CLU_598017_0_0_2"/>
<dbReference type="InParanoid" id="Q59022"/>
<dbReference type="OrthoDB" id="18388at2157"/>
<dbReference type="PhylomeDB" id="Q59022"/>
<dbReference type="Proteomes" id="UP000000805">
    <property type="component" value="Chromosome"/>
</dbReference>
<dbReference type="GO" id="GO:0005524">
    <property type="term" value="F:ATP binding"/>
    <property type="evidence" value="ECO:0007669"/>
    <property type="project" value="UniProtKB-KW"/>
</dbReference>
<dbReference type="CDD" id="cd00267">
    <property type="entry name" value="ABC_ATPase"/>
    <property type="match status" value="1"/>
</dbReference>
<dbReference type="Gene3D" id="3.40.50.300">
    <property type="entry name" value="P-loop containing nucleotide triphosphate hydrolases"/>
    <property type="match status" value="1"/>
</dbReference>
<dbReference type="InterPro" id="IPR046834">
    <property type="entry name" value="ABC_ATPase_C"/>
</dbReference>
<dbReference type="InterPro" id="IPR019195">
    <property type="entry name" value="ABC_ATPase_put"/>
</dbReference>
<dbReference type="InterPro" id="IPR046833">
    <property type="entry name" value="ABC_N"/>
</dbReference>
<dbReference type="InterPro" id="IPR027417">
    <property type="entry name" value="P-loop_NTPase"/>
</dbReference>
<dbReference type="PANTHER" id="PTHR38149">
    <property type="entry name" value="ATPASE"/>
    <property type="match status" value="1"/>
</dbReference>
<dbReference type="PANTHER" id="PTHR38149:SF1">
    <property type="entry name" value="ATPASE"/>
    <property type="match status" value="1"/>
</dbReference>
<dbReference type="Pfam" id="PF09818">
    <property type="entry name" value="ABC_ATPase"/>
    <property type="match status" value="1"/>
</dbReference>
<dbReference type="Pfam" id="PF20446">
    <property type="entry name" value="ABC_N"/>
    <property type="match status" value="1"/>
</dbReference>
<dbReference type="SUPFAM" id="SSF52540">
    <property type="entry name" value="P-loop containing nucleoside triphosphate hydrolases"/>
    <property type="match status" value="1"/>
</dbReference>
<gene>
    <name type="ordered locus">MJ1628</name>
</gene>
<accession>Q59022</accession>
<organism>
    <name type="scientific">Methanocaldococcus jannaschii (strain ATCC 43067 / DSM 2661 / JAL-1 / JCM 10045 / NBRC 100440)</name>
    <name type="common">Methanococcus jannaschii</name>
    <dbReference type="NCBI Taxonomy" id="243232"/>
    <lineage>
        <taxon>Archaea</taxon>
        <taxon>Methanobacteriati</taxon>
        <taxon>Methanobacteriota</taxon>
        <taxon>Methanomada group</taxon>
        <taxon>Methanococci</taxon>
        <taxon>Methanococcales</taxon>
        <taxon>Methanocaldococcaceae</taxon>
        <taxon>Methanocaldococcus</taxon>
    </lineage>
</organism>
<reference key="1">
    <citation type="journal article" date="1996" name="Science">
        <title>Complete genome sequence of the methanogenic archaeon, Methanococcus jannaschii.</title>
        <authorList>
            <person name="Bult C.J."/>
            <person name="White O."/>
            <person name="Olsen G.J."/>
            <person name="Zhou L."/>
            <person name="Fleischmann R.D."/>
            <person name="Sutton G.G."/>
            <person name="Blake J.A."/>
            <person name="FitzGerald L.M."/>
            <person name="Clayton R.A."/>
            <person name="Gocayne J.D."/>
            <person name="Kerlavage A.R."/>
            <person name="Dougherty B.A."/>
            <person name="Tomb J.-F."/>
            <person name="Adams M.D."/>
            <person name="Reich C.I."/>
            <person name="Overbeek R."/>
            <person name="Kirkness E.F."/>
            <person name="Weinstock K.G."/>
            <person name="Merrick J.M."/>
            <person name="Glodek A."/>
            <person name="Scott J.L."/>
            <person name="Geoghagen N.S.M."/>
            <person name="Weidman J.F."/>
            <person name="Fuhrmann J.L."/>
            <person name="Nguyen D."/>
            <person name="Utterback T.R."/>
            <person name="Kelley J.M."/>
            <person name="Peterson J.D."/>
            <person name="Sadow P.W."/>
            <person name="Hanna M.C."/>
            <person name="Cotton M.D."/>
            <person name="Roberts K.M."/>
            <person name="Hurst M.A."/>
            <person name="Kaine B.P."/>
            <person name="Borodovsky M."/>
            <person name="Klenk H.-P."/>
            <person name="Fraser C.M."/>
            <person name="Smith H.O."/>
            <person name="Woese C.R."/>
            <person name="Venter J.C."/>
        </authorList>
    </citation>
    <scope>NUCLEOTIDE SEQUENCE [LARGE SCALE GENOMIC DNA]</scope>
    <source>
        <strain>ATCC 43067 / DSM 2661 / JAL-1 / JCM 10045 / NBRC 100440</strain>
    </source>
</reference>
<proteinExistence type="predicted"/>
<keyword id="KW-0067">ATP-binding</keyword>
<keyword id="KW-0547">Nucleotide-binding</keyword>
<keyword id="KW-1185">Reference proteome</keyword>